<feature type="chain" id="PRO_0000287168" description="Transmembrane channel-like protein 7">
    <location>
        <begin position="1"/>
        <end position="735"/>
    </location>
</feature>
<feature type="topological domain" description="Extracellular" evidence="2">
    <location>
        <begin position="1"/>
        <end position="164"/>
    </location>
</feature>
<feature type="transmembrane region" description="Helical" evidence="2">
    <location>
        <begin position="165"/>
        <end position="185"/>
    </location>
</feature>
<feature type="topological domain" description="Cytoplasmic" evidence="2">
    <location>
        <begin position="186"/>
        <end position="233"/>
    </location>
</feature>
<feature type="transmembrane region" description="Helical" evidence="2">
    <location>
        <begin position="234"/>
        <end position="254"/>
    </location>
</feature>
<feature type="topological domain" description="Extracellular" evidence="2">
    <location>
        <begin position="255"/>
        <end position="258"/>
    </location>
</feature>
<feature type="transmembrane region" description="Helical" evidence="2">
    <location>
        <begin position="259"/>
        <end position="279"/>
    </location>
</feature>
<feature type="topological domain" description="Cytoplasmic" evidence="2">
    <location>
        <begin position="280"/>
        <end position="355"/>
    </location>
</feature>
<feature type="transmembrane region" description="Helical" evidence="2">
    <location>
        <begin position="356"/>
        <end position="376"/>
    </location>
</feature>
<feature type="topological domain" description="Extracellular" evidence="2">
    <location>
        <begin position="377"/>
        <end position="403"/>
    </location>
</feature>
<feature type="transmembrane region" description="Helical" evidence="2">
    <location>
        <begin position="404"/>
        <end position="424"/>
    </location>
</feature>
<feature type="topological domain" description="Cytoplasmic" evidence="2">
    <location>
        <begin position="425"/>
        <end position="436"/>
    </location>
</feature>
<feature type="transmembrane region" description="Helical" evidence="2">
    <location>
        <begin position="437"/>
        <end position="457"/>
    </location>
</feature>
<feature type="topological domain" description="Extracellular" evidence="2">
    <location>
        <begin position="458"/>
        <end position="488"/>
    </location>
</feature>
<feature type="transmembrane region" description="Helical" evidence="2">
    <location>
        <begin position="489"/>
        <end position="509"/>
    </location>
</feature>
<feature type="topological domain" description="Cytoplasmic" evidence="2">
    <location>
        <begin position="510"/>
        <end position="548"/>
    </location>
</feature>
<feature type="transmembrane region" description="Helical" evidence="2">
    <location>
        <begin position="549"/>
        <end position="569"/>
    </location>
</feature>
<feature type="topological domain" description="Extracellular" evidence="2">
    <location>
        <begin position="570"/>
        <end position="594"/>
    </location>
</feature>
<feature type="transmembrane region" description="Helical" evidence="2">
    <location>
        <begin position="595"/>
        <end position="615"/>
    </location>
</feature>
<feature type="topological domain" description="Cytoplasmic" evidence="2">
    <location>
        <begin position="616"/>
        <end position="634"/>
    </location>
</feature>
<feature type="transmembrane region" description="Helical" evidence="2">
    <location>
        <begin position="635"/>
        <end position="655"/>
    </location>
</feature>
<feature type="topological domain" description="Extracellular" evidence="2">
    <location>
        <begin position="656"/>
        <end position="658"/>
    </location>
</feature>
<feature type="transmembrane region" description="Helical" evidence="2">
    <location>
        <begin position="659"/>
        <end position="679"/>
    </location>
</feature>
<feature type="topological domain" description="Cytoplasmic" evidence="2">
    <location>
        <begin position="680"/>
        <end position="735"/>
    </location>
</feature>
<feature type="region of interest" description="Disordered" evidence="3">
    <location>
        <begin position="710"/>
        <end position="735"/>
    </location>
</feature>
<feature type="glycosylation site" description="N-linked (GlcNAc...) asparagine" evidence="2">
    <location>
        <position position="385"/>
    </location>
</feature>
<organism>
    <name type="scientific">Gallus gallus</name>
    <name type="common">Chicken</name>
    <dbReference type="NCBI Taxonomy" id="9031"/>
    <lineage>
        <taxon>Eukaryota</taxon>
        <taxon>Metazoa</taxon>
        <taxon>Chordata</taxon>
        <taxon>Craniata</taxon>
        <taxon>Vertebrata</taxon>
        <taxon>Euteleostomi</taxon>
        <taxon>Archelosauria</taxon>
        <taxon>Archosauria</taxon>
        <taxon>Dinosauria</taxon>
        <taxon>Saurischia</taxon>
        <taxon>Theropoda</taxon>
        <taxon>Coelurosauria</taxon>
        <taxon>Aves</taxon>
        <taxon>Neognathae</taxon>
        <taxon>Galloanserae</taxon>
        <taxon>Galliformes</taxon>
        <taxon>Phasianidae</taxon>
        <taxon>Phasianinae</taxon>
        <taxon>Gallus</taxon>
    </lineage>
</organism>
<comment type="function">
    <text evidence="1">Probable component of an ion channel.</text>
</comment>
<comment type="subcellular location">
    <subcellularLocation>
        <location evidence="4">Membrane</location>
        <topology evidence="4">Multi-pass membrane protein</topology>
    </subcellularLocation>
</comment>
<comment type="similarity">
    <text evidence="4">Belongs to the TMC family.</text>
</comment>
<accession>Q5YCC5</accession>
<dbReference type="EMBL" id="AY581312">
    <property type="protein sequence ID" value="AAT85603.1"/>
    <property type="molecule type" value="mRNA"/>
</dbReference>
<dbReference type="SMR" id="Q5YCC5"/>
<dbReference type="FunCoup" id="Q5YCC5">
    <property type="interactions" value="76"/>
</dbReference>
<dbReference type="GlyCosmos" id="Q5YCC5">
    <property type="glycosylation" value="1 site, No reported glycans"/>
</dbReference>
<dbReference type="GlyGen" id="Q5YCC5">
    <property type="glycosylation" value="1 site"/>
</dbReference>
<dbReference type="PaxDb" id="9031-ENSGALP00000011144"/>
<dbReference type="VEuPathDB" id="HostDB:geneid_416610"/>
<dbReference type="eggNOG" id="ENOG502QPM8">
    <property type="taxonomic scope" value="Eukaryota"/>
</dbReference>
<dbReference type="InParanoid" id="Q5YCC5"/>
<dbReference type="PhylomeDB" id="Q5YCC5"/>
<dbReference type="Proteomes" id="UP000000539">
    <property type="component" value="Unassembled WGS sequence"/>
</dbReference>
<dbReference type="GO" id="GO:0005886">
    <property type="term" value="C:plasma membrane"/>
    <property type="evidence" value="ECO:0007669"/>
    <property type="project" value="InterPro"/>
</dbReference>
<dbReference type="GO" id="GO:0008381">
    <property type="term" value="F:mechanosensitive monoatomic ion channel activity"/>
    <property type="evidence" value="ECO:0000318"/>
    <property type="project" value="GO_Central"/>
</dbReference>
<dbReference type="GO" id="GO:0050954">
    <property type="term" value="P:sensory perception of mechanical stimulus"/>
    <property type="evidence" value="ECO:0000250"/>
    <property type="project" value="UniProtKB"/>
</dbReference>
<dbReference type="InterPro" id="IPR038900">
    <property type="entry name" value="TMC"/>
</dbReference>
<dbReference type="InterPro" id="IPR012496">
    <property type="entry name" value="TMC_dom"/>
</dbReference>
<dbReference type="PANTHER" id="PTHR23302:SF42">
    <property type="entry name" value="TRANSMEMBRANE CHANNEL-LIKE PROTEIN 7"/>
    <property type="match status" value="1"/>
</dbReference>
<dbReference type="PANTHER" id="PTHR23302">
    <property type="entry name" value="TRANSMEMBRANE CHANNEL-RELATED"/>
    <property type="match status" value="1"/>
</dbReference>
<dbReference type="Pfam" id="PF07810">
    <property type="entry name" value="TMC"/>
    <property type="match status" value="1"/>
</dbReference>
<sequence length="735" mass="84377">MSEFGAGAELPGWVTESRSRGEFFSPEESHAAAPAGFLQELPSYRSVLWRRAAAGDVQERWGNLRGIASAERREPQPDGGERGAIPLWELPFSIAEKRDSQQGDIKYSSGWNHWKRTSSKSWKKALKDIKELSSYMQLWRHDIHSIEGKFGTGIQSYFSFLRFLVLLNFLMFILMFSFVTLPAVISNYGIFNSSSTKISPNNTEPYCTVYTPSGNKGLVYFYTYLKDLLTGTGFLEVTVLFYGYYTIDAAWFSVLRYNLPLAYLLTTFAYLALSFVWIIKRSVERFRQHLVDDEDQFQSYCNKVFAGWDFCITDLNAARLKHRSLLYELQTNLEEERLKQKIAERTMKEKLQIYSLRIFINIIVIAVLSGCFYSIYRATVFSQENSSVSIRRNVMIANLLVQYLPSIVITSANFIAPQIFSFLIRFEDYSAAFEIRLTLIRCVFVRLANVGVLLFSLWSQIHCDNDQCKACGYDYELYPCWESAVGQEMYKLLIFDFMIIIAMTLFVDFPRKLLVTYCSWKLVQWWGLQEFGISDNVLEIIYGQTICWIGTFFSPLLPAIATIKYFIIFYIKKISLIHTRKPASRPIRASSSNFFFLAVLLIGLILAFVPLGVSIALISSSKACGPFRNFNTSWAIVPYTILEFPIGLQKFLYGIASEAFAVPFFVIACLFMFYFIALAGAHKRVVEQLREQLVTESRDKLFLLEKLSEAQKNSGKPQKARKLTSSWLLEPLDKG</sequence>
<reference key="1">
    <citation type="journal article" date="2005" name="Neuroscience">
        <title>Identification of chicken transmembrane channel-like (TMC) genes: expression analysis in the cochlea.</title>
        <authorList>
            <person name="Mutai H."/>
            <person name="Mann S."/>
            <person name="Heller S."/>
        </authorList>
    </citation>
    <scope>NUCLEOTIDE SEQUENCE [MRNA]</scope>
    <source>
        <tissue>Inner ear</tissue>
    </source>
</reference>
<keyword id="KW-0325">Glycoprotein</keyword>
<keyword id="KW-0472">Membrane</keyword>
<keyword id="KW-1185">Reference proteome</keyword>
<keyword id="KW-0812">Transmembrane</keyword>
<keyword id="KW-1133">Transmembrane helix</keyword>
<protein>
    <recommendedName>
        <fullName>Transmembrane channel-like protein 7</fullName>
    </recommendedName>
</protein>
<name>TMC7_CHICK</name>
<gene>
    <name type="primary">Tmc7</name>
</gene>
<proteinExistence type="evidence at transcript level"/>
<evidence type="ECO:0000250" key="1"/>
<evidence type="ECO:0000255" key="2"/>
<evidence type="ECO:0000256" key="3">
    <source>
        <dbReference type="SAM" id="MobiDB-lite"/>
    </source>
</evidence>
<evidence type="ECO:0000305" key="4"/>